<comment type="function">
    <text evidence="1 2 5 6">Cytochrome P450 monooxygenase; part of the tra gene cluster that produces terrestric acid (PubMed:30811183). The clavatol biosynthesis cluster cla and the terrestric acid cluster tra are both involved in the production of peniphenones and penilactones (PubMed:30811183). The non-reducing PKS claF is responsible for the formation of clavatol from successive condensations of 3 malonyl-CoA units, presumably with a simple acetyl-CoA starter unit, and 2 methylation steps (PubMed:30811183). The esterase claE probably collaborates with claF by catalyzing the hydrolysis of ACP-bound acyl intermediates to free the ACP from stalled intermediates (By similarity). The clavatol oxidase claD then converts clavatol to hydroxyclavatol (PubMed:30811183). Spontaneous dehydration of hydroxyclavatol leads to the accumulation of the highly active ortho-quinone methide (PubMed:30811183, PubMed:31860310). On the other hand, the PKS-NRPS hybrid traA is involved in the formation of crustosic acid, with the help of traB and traD (PubMed:30811183). The polyketide synthase module (PKS) of traA is responsible for the synthesis of the polyketide backbone via the condensation of an acetyl-CoA starter unit with 3 malonyl-CoA units (PubMed:30811183). The downstream nonribosomal peptide synthetase (NRPS) module then amidates the carboxyl end of the polyketide with L-malic acid (PubMed:30811183). Because traA lacks a designated enoylreductase (ER) domain, the required activity is provided the enoyl reductase traG (By similarity). Crustosic acid undergoes decarboxylation and isomerization to the terrestric acid, catalyzed by the 2-oxoglutarate-dependent dioxygenase traH (PubMed:30811183). Both acids are further converted to the 2 gamma-butyrolactones (R)-5-methyltetronic acid and (S)-5-carboxylmethyltetronic acid, with involvement of the cytochrome P450 monooxygenase claJ (PubMed:30811183). Spontaneous addition of the methide to these gamma-butyrolactones leads to peniphenone D and penilactone D, which undergo again stereospecific attacking by methide to give penilactones A and B (PubMed:30811183, PubMed:31860310).</text>
</comment>
<comment type="cofactor">
    <cofactor evidence="3">
        <name>heme</name>
        <dbReference type="ChEBI" id="CHEBI:30413"/>
    </cofactor>
</comment>
<comment type="pathway">
    <text evidence="5">Secondary metabolite biosynthesis.</text>
</comment>
<comment type="subcellular location">
    <subcellularLocation>
        <location evidence="4">Membrane</location>
        <topology evidence="4">Single-pass membrane protein</topology>
    </subcellularLocation>
</comment>
<comment type="disruption phenotype">
    <text evidence="5">Completely abolishes the production of peniphenone D, penilactone D, penilactone A and penilactone B, as well as of crustosic acid and terrestric acid.</text>
</comment>
<comment type="similarity">
    <text evidence="8">Belongs to the cytochrome P450 family.</text>
</comment>
<dbReference type="EC" id="1.-.-.-" evidence="9"/>
<dbReference type="EMBL" id="MK360919">
    <property type="protein sequence ID" value="QBK15050.1"/>
    <property type="molecule type" value="Genomic_DNA"/>
</dbReference>
<dbReference type="SMR" id="A0A481WNM6"/>
<dbReference type="GO" id="GO:0016020">
    <property type="term" value="C:membrane"/>
    <property type="evidence" value="ECO:0007669"/>
    <property type="project" value="UniProtKB-SubCell"/>
</dbReference>
<dbReference type="GO" id="GO:0020037">
    <property type="term" value="F:heme binding"/>
    <property type="evidence" value="ECO:0007669"/>
    <property type="project" value="InterPro"/>
</dbReference>
<dbReference type="GO" id="GO:0005506">
    <property type="term" value="F:iron ion binding"/>
    <property type="evidence" value="ECO:0007669"/>
    <property type="project" value="InterPro"/>
</dbReference>
<dbReference type="GO" id="GO:0004497">
    <property type="term" value="F:monooxygenase activity"/>
    <property type="evidence" value="ECO:0007669"/>
    <property type="project" value="UniProtKB-KW"/>
</dbReference>
<dbReference type="GO" id="GO:0016705">
    <property type="term" value="F:oxidoreductase activity, acting on paired donors, with incorporation or reduction of molecular oxygen"/>
    <property type="evidence" value="ECO:0007669"/>
    <property type="project" value="InterPro"/>
</dbReference>
<dbReference type="GO" id="GO:0043386">
    <property type="term" value="P:mycotoxin biosynthetic process"/>
    <property type="evidence" value="ECO:0007669"/>
    <property type="project" value="UniProtKB-ARBA"/>
</dbReference>
<dbReference type="CDD" id="cd11058">
    <property type="entry name" value="CYP60B-like"/>
    <property type="match status" value="1"/>
</dbReference>
<dbReference type="Gene3D" id="1.10.630.10">
    <property type="entry name" value="Cytochrome P450"/>
    <property type="match status" value="1"/>
</dbReference>
<dbReference type="InterPro" id="IPR001128">
    <property type="entry name" value="Cyt_P450"/>
</dbReference>
<dbReference type="InterPro" id="IPR017972">
    <property type="entry name" value="Cyt_P450_CS"/>
</dbReference>
<dbReference type="InterPro" id="IPR002401">
    <property type="entry name" value="Cyt_P450_E_grp-I"/>
</dbReference>
<dbReference type="InterPro" id="IPR036396">
    <property type="entry name" value="Cyt_P450_sf"/>
</dbReference>
<dbReference type="InterPro" id="IPR050121">
    <property type="entry name" value="Cytochrome_P450_monoxygenase"/>
</dbReference>
<dbReference type="PANTHER" id="PTHR24305">
    <property type="entry name" value="CYTOCHROME P450"/>
    <property type="match status" value="1"/>
</dbReference>
<dbReference type="PANTHER" id="PTHR24305:SF210">
    <property type="entry name" value="CYTOCHROME P450 MONOOXYGENASE ASQL-RELATED"/>
    <property type="match status" value="1"/>
</dbReference>
<dbReference type="Pfam" id="PF00067">
    <property type="entry name" value="p450"/>
    <property type="match status" value="1"/>
</dbReference>
<dbReference type="PRINTS" id="PR00463">
    <property type="entry name" value="EP450I"/>
</dbReference>
<dbReference type="PRINTS" id="PR00385">
    <property type="entry name" value="P450"/>
</dbReference>
<dbReference type="SUPFAM" id="SSF48264">
    <property type="entry name" value="Cytochrome P450"/>
    <property type="match status" value="1"/>
</dbReference>
<dbReference type="PROSITE" id="PS00086">
    <property type="entry name" value="CYTOCHROME_P450"/>
    <property type="match status" value="1"/>
</dbReference>
<feature type="chain" id="PRO_0000455067" description="Cytochrome P450 monooxygenase traB">
    <location>
        <begin position="1"/>
        <end position="509"/>
    </location>
</feature>
<feature type="transmembrane region" description="Helical" evidence="4">
    <location>
        <begin position="8"/>
        <end position="28"/>
    </location>
</feature>
<feature type="binding site" description="axial binding residue" evidence="3">
    <location>
        <position position="453"/>
    </location>
    <ligand>
        <name>heme</name>
        <dbReference type="ChEBI" id="CHEBI:30413"/>
    </ligand>
    <ligandPart>
        <name>Fe</name>
        <dbReference type="ChEBI" id="CHEBI:18248"/>
    </ligandPart>
</feature>
<keyword id="KW-0349">Heme</keyword>
<keyword id="KW-0408">Iron</keyword>
<keyword id="KW-0472">Membrane</keyword>
<keyword id="KW-0479">Metal-binding</keyword>
<keyword id="KW-0503">Monooxygenase</keyword>
<keyword id="KW-0560">Oxidoreductase</keyword>
<keyword id="KW-0812">Transmembrane</keyword>
<keyword id="KW-1133">Transmembrane helix</keyword>
<name>TRAB_PENCR</name>
<sequence length="509" mass="58071">MEDFKVKLVELVSITGGLIVLFIAYTGFRTVYNASFNRLRHIPGPWINSVSMIPYARHMLAGTTVENSVRLHEKYGDVVRISPNEVSFISGETAFPDIYGFRTGKLKGHLNMEKDPVWYVKPSNGSPSLLQANDEDHARGRRVLSHAFSERAVAAQEPLVQTYVDQLINGLKGATAEKEGEGVVDMVSWYNWTTFDIIADLMFGEPFGCLQDLSTHKYVAVLLESFKSLRILYVLAHFPWLKYFGNLFLDQRQVQKRKDHLSWVSTQVQKRRDRETTRPDFMTLILANNGNKGSKLTDEEINSNAFLLLNAGSETTATLLSAVTFLLLKNPRVMEKLKQEIREKFASYEEIQLPTLNTMTYLHAVLLEALRYFPPAPVGFGRVVNRGGEFISGHFLPEGCIVSVSQYAAYHSSRNFKDPDAFVPERWHVPREKEYADDKRSAAQPFSYGPRGCLGRNLAHAELRIILAKMVWSFDLELEERSQDWLSRCKVMRLWVKPELAVKLKKVIR</sequence>
<gene>
    <name evidence="7" type="primary">traB</name>
</gene>
<reference key="1">
    <citation type="journal article" date="2019" name="J. Am. Chem. Soc.">
        <title>Peniphenone and penilactone formation in Penicillium crustosum via 1,4-Michael additions of ortho-quinone methide from hydroxyclavatol to gamma-butyrolactones from Crustosic Acid.</title>
        <authorList>
            <person name="Fan J."/>
            <person name="Liao G."/>
            <person name="Kindinger F."/>
            <person name="Ludwig-Radtke L."/>
            <person name="Yin W.B."/>
            <person name="Li S.M."/>
        </authorList>
    </citation>
    <scope>NUCLEOTIDE SEQUENCE [GENOMIC DNA]</scope>
    <scope>FUNCTION</scope>
    <scope>DISRUPTION PHENOTYPE</scope>
    <scope>PATHWAY</scope>
    <source>
        <strain>PRB-2</strain>
    </source>
</reference>
<reference key="2">
    <citation type="journal article" date="2020" name="J. Org. Chem.">
        <title>Increasing Structural Diversity of Natural Products by Michael Addition with ortho-Quinone Methide as the Acceptor.</title>
        <authorList>
            <person name="Liao G."/>
            <person name="Fan J."/>
            <person name="Ludwig-Radtke L."/>
            <person name="Backhaus K."/>
            <person name="Li S.M."/>
        </authorList>
    </citation>
    <scope>FUNCTION</scope>
</reference>
<accession>A0A481WNM6</accession>
<protein>
    <recommendedName>
        <fullName evidence="7">Cytochrome P450 monooxygenase traB</fullName>
        <ecNumber evidence="9">1.-.-.-</ecNumber>
    </recommendedName>
    <alternativeName>
        <fullName evidence="7">Terrestric acid biosynthesis cluster protein B</fullName>
    </alternativeName>
</protein>
<organism>
    <name type="scientific">Penicillium crustosum</name>
    <name type="common">Blue mold fungus</name>
    <dbReference type="NCBI Taxonomy" id="36656"/>
    <lineage>
        <taxon>Eukaryota</taxon>
        <taxon>Fungi</taxon>
        <taxon>Dikarya</taxon>
        <taxon>Ascomycota</taxon>
        <taxon>Pezizomycotina</taxon>
        <taxon>Eurotiomycetes</taxon>
        <taxon>Eurotiomycetidae</taxon>
        <taxon>Eurotiales</taxon>
        <taxon>Aspergillaceae</taxon>
        <taxon>Penicillium</taxon>
    </lineage>
</organism>
<evidence type="ECO:0000250" key="1">
    <source>
        <dbReference type="UniProtKB" id="A0A0E0RXA7"/>
    </source>
</evidence>
<evidence type="ECO:0000250" key="2">
    <source>
        <dbReference type="UniProtKB" id="A0A161CKG1"/>
    </source>
</evidence>
<evidence type="ECO:0000250" key="3">
    <source>
        <dbReference type="UniProtKB" id="P04798"/>
    </source>
</evidence>
<evidence type="ECO:0000255" key="4"/>
<evidence type="ECO:0000269" key="5">
    <source>
    </source>
</evidence>
<evidence type="ECO:0000269" key="6">
    <source>
    </source>
</evidence>
<evidence type="ECO:0000303" key="7">
    <source>
    </source>
</evidence>
<evidence type="ECO:0000305" key="8"/>
<evidence type="ECO:0000305" key="9">
    <source>
    </source>
</evidence>
<proteinExistence type="inferred from homology"/>